<keyword id="KW-0131">Cell cycle</keyword>
<keyword id="KW-0132">Cell division</keyword>
<keyword id="KW-0342">GTP-binding</keyword>
<keyword id="KW-0460">Magnesium</keyword>
<keyword id="KW-0479">Metal-binding</keyword>
<keyword id="KW-0547">Nucleotide-binding</keyword>
<keyword id="KW-1185">Reference proteome</keyword>
<keyword id="KW-0717">Septation</keyword>
<accession>Q04JI0</accession>
<name>ENGB_STRP2</name>
<organism>
    <name type="scientific">Streptococcus pneumoniae serotype 2 (strain D39 / NCTC 7466)</name>
    <dbReference type="NCBI Taxonomy" id="373153"/>
    <lineage>
        <taxon>Bacteria</taxon>
        <taxon>Bacillati</taxon>
        <taxon>Bacillota</taxon>
        <taxon>Bacilli</taxon>
        <taxon>Lactobacillales</taxon>
        <taxon>Streptococcaceae</taxon>
        <taxon>Streptococcus</taxon>
    </lineage>
</organism>
<feature type="chain" id="PRO_1000005861" description="Probable GTP-binding protein EngB">
    <location>
        <begin position="1"/>
        <end position="195"/>
    </location>
</feature>
<feature type="domain" description="EngB-type G" evidence="1">
    <location>
        <begin position="24"/>
        <end position="195"/>
    </location>
</feature>
<feature type="binding site" evidence="1">
    <location>
        <begin position="32"/>
        <end position="39"/>
    </location>
    <ligand>
        <name>GTP</name>
        <dbReference type="ChEBI" id="CHEBI:37565"/>
    </ligand>
</feature>
<feature type="binding site" evidence="1">
    <location>
        <position position="39"/>
    </location>
    <ligand>
        <name>Mg(2+)</name>
        <dbReference type="ChEBI" id="CHEBI:18420"/>
    </ligand>
</feature>
<feature type="binding site" evidence="1">
    <location>
        <begin position="59"/>
        <end position="63"/>
    </location>
    <ligand>
        <name>GTP</name>
        <dbReference type="ChEBI" id="CHEBI:37565"/>
    </ligand>
</feature>
<feature type="binding site" evidence="1">
    <location>
        <position position="61"/>
    </location>
    <ligand>
        <name>Mg(2+)</name>
        <dbReference type="ChEBI" id="CHEBI:18420"/>
    </ligand>
</feature>
<feature type="binding site" evidence="1">
    <location>
        <begin position="77"/>
        <end position="80"/>
    </location>
    <ligand>
        <name>GTP</name>
        <dbReference type="ChEBI" id="CHEBI:37565"/>
    </ligand>
</feature>
<feature type="binding site" evidence="1">
    <location>
        <begin position="144"/>
        <end position="147"/>
    </location>
    <ligand>
        <name>GTP</name>
        <dbReference type="ChEBI" id="CHEBI:37565"/>
    </ligand>
</feature>
<feature type="binding site" evidence="1">
    <location>
        <begin position="176"/>
        <end position="178"/>
    </location>
    <ligand>
        <name>GTP</name>
        <dbReference type="ChEBI" id="CHEBI:37565"/>
    </ligand>
</feature>
<comment type="function">
    <text evidence="1">Necessary for normal cell division and for the maintenance of normal septation.</text>
</comment>
<comment type="cofactor">
    <cofactor evidence="1">
        <name>Mg(2+)</name>
        <dbReference type="ChEBI" id="CHEBI:18420"/>
    </cofactor>
</comment>
<comment type="similarity">
    <text evidence="1">Belongs to the TRAFAC class TrmE-Era-EngA-EngB-Septin-like GTPase superfamily. EngB GTPase family.</text>
</comment>
<proteinExistence type="inferred from homology"/>
<sequence>MELNTHNAEILLSAANKSHYPQDELPEIALAGRSNVGKSSFINTMLNRKNLARTSGKPGKTQLLNFFNIDDKMRFVDVPGYGYARVSKKEREKWGCMIEEYLTTRENLRAVVSLVDLRHDPSADDVQMYEFLKYYEIPVIIVATKADKIPRGKWNKHESAIKKKLNFDPSDDFILFSSVSKAGMDEAWDAILEKL</sequence>
<gene>
    <name evidence="1" type="primary">engB</name>
    <name type="ordered locus">SPD_1398</name>
</gene>
<evidence type="ECO:0000255" key="1">
    <source>
        <dbReference type="HAMAP-Rule" id="MF_00321"/>
    </source>
</evidence>
<reference key="1">
    <citation type="journal article" date="2007" name="J. Bacteriol.">
        <title>Genome sequence of Avery's virulent serotype 2 strain D39 of Streptococcus pneumoniae and comparison with that of unencapsulated laboratory strain R6.</title>
        <authorList>
            <person name="Lanie J.A."/>
            <person name="Ng W.-L."/>
            <person name="Kazmierczak K.M."/>
            <person name="Andrzejewski T.M."/>
            <person name="Davidsen T.M."/>
            <person name="Wayne K.J."/>
            <person name="Tettelin H."/>
            <person name="Glass J.I."/>
            <person name="Winkler M.E."/>
        </authorList>
    </citation>
    <scope>NUCLEOTIDE SEQUENCE [LARGE SCALE GENOMIC DNA]</scope>
    <source>
        <strain>D39 / NCTC 7466</strain>
    </source>
</reference>
<protein>
    <recommendedName>
        <fullName evidence="1">Probable GTP-binding protein EngB</fullName>
    </recommendedName>
</protein>
<dbReference type="EMBL" id="CP000410">
    <property type="protein sequence ID" value="ABJ53689.1"/>
    <property type="molecule type" value="Genomic_DNA"/>
</dbReference>
<dbReference type="SMR" id="Q04JI0"/>
<dbReference type="PaxDb" id="373153-SPD_1398"/>
<dbReference type="KEGG" id="spd:SPD_1398"/>
<dbReference type="eggNOG" id="COG0218">
    <property type="taxonomic scope" value="Bacteria"/>
</dbReference>
<dbReference type="HOGENOM" id="CLU_033732_3_0_9"/>
<dbReference type="Proteomes" id="UP000001452">
    <property type="component" value="Chromosome"/>
</dbReference>
<dbReference type="GO" id="GO:0005829">
    <property type="term" value="C:cytosol"/>
    <property type="evidence" value="ECO:0007669"/>
    <property type="project" value="TreeGrafter"/>
</dbReference>
<dbReference type="GO" id="GO:0005525">
    <property type="term" value="F:GTP binding"/>
    <property type="evidence" value="ECO:0007669"/>
    <property type="project" value="UniProtKB-UniRule"/>
</dbReference>
<dbReference type="GO" id="GO:0046872">
    <property type="term" value="F:metal ion binding"/>
    <property type="evidence" value="ECO:0007669"/>
    <property type="project" value="UniProtKB-KW"/>
</dbReference>
<dbReference type="GO" id="GO:0000917">
    <property type="term" value="P:division septum assembly"/>
    <property type="evidence" value="ECO:0007669"/>
    <property type="project" value="UniProtKB-KW"/>
</dbReference>
<dbReference type="CDD" id="cd01876">
    <property type="entry name" value="YihA_EngB"/>
    <property type="match status" value="1"/>
</dbReference>
<dbReference type="FunFam" id="3.40.50.300:FF:000098">
    <property type="entry name" value="Probable GTP-binding protein EngB"/>
    <property type="match status" value="1"/>
</dbReference>
<dbReference type="Gene3D" id="3.40.50.300">
    <property type="entry name" value="P-loop containing nucleotide triphosphate hydrolases"/>
    <property type="match status" value="1"/>
</dbReference>
<dbReference type="HAMAP" id="MF_00321">
    <property type="entry name" value="GTPase_EngB"/>
    <property type="match status" value="1"/>
</dbReference>
<dbReference type="InterPro" id="IPR030393">
    <property type="entry name" value="G_ENGB_dom"/>
</dbReference>
<dbReference type="InterPro" id="IPR006073">
    <property type="entry name" value="GTP-bd"/>
</dbReference>
<dbReference type="InterPro" id="IPR019987">
    <property type="entry name" value="GTP-bd_ribosome_bio_YsxC"/>
</dbReference>
<dbReference type="InterPro" id="IPR027417">
    <property type="entry name" value="P-loop_NTPase"/>
</dbReference>
<dbReference type="NCBIfam" id="TIGR03598">
    <property type="entry name" value="GTPase_YsxC"/>
    <property type="match status" value="1"/>
</dbReference>
<dbReference type="PANTHER" id="PTHR11649:SF13">
    <property type="entry name" value="ENGB-TYPE G DOMAIN-CONTAINING PROTEIN"/>
    <property type="match status" value="1"/>
</dbReference>
<dbReference type="PANTHER" id="PTHR11649">
    <property type="entry name" value="MSS1/TRME-RELATED GTP-BINDING PROTEIN"/>
    <property type="match status" value="1"/>
</dbReference>
<dbReference type="Pfam" id="PF01926">
    <property type="entry name" value="MMR_HSR1"/>
    <property type="match status" value="1"/>
</dbReference>
<dbReference type="PRINTS" id="PR00449">
    <property type="entry name" value="RASTRNSFRMNG"/>
</dbReference>
<dbReference type="SUPFAM" id="SSF52540">
    <property type="entry name" value="P-loop containing nucleoside triphosphate hydrolases"/>
    <property type="match status" value="1"/>
</dbReference>
<dbReference type="PROSITE" id="PS51706">
    <property type="entry name" value="G_ENGB"/>
    <property type="match status" value="1"/>
</dbReference>